<accession>Q43484</accession>
<accession>O22532</accession>
<comment type="function">
    <text>May play a role in meristem formation and/or maintenance. Overexpression causes the hooded phenotype characterized by the appearance of an extra flower of inverse polarity on the lemma. Binds to the DNA sequence 5'-TGAC-3'.</text>
</comment>
<comment type="subunit">
    <text>Binds DNA as a monomer.</text>
</comment>
<comment type="subcellular location">
    <subcellularLocation>
        <location evidence="4">Nucleus</location>
    </subcellularLocation>
</comment>
<comment type="tissue specificity">
    <text>The unit of inflorescence is the spikelet, which bears a fertile tract, the lemma, and the floret consisting of palea, two lodicules, three stamens and the pistil. The lemma is completed by the awn, an appendage homologous to the laminae of normal leaves. Expressed in the inflorescences and lemmas and at lower levels, in palea and vascular bundles.</text>
</comment>
<comment type="developmental stage">
    <text>Periclinal cell divisions in the subepidermal layer of the awn primordium gives rise to a meristematic cushion in hooded phenotypes. Expressed before the formation of the cushion and continues as it is formed and in later stages its expression is down-regulated.</text>
</comment>
<comment type="similarity">
    <text evidence="2">Belongs to the TALE/KNOX homeobox family.</text>
</comment>
<gene>
    <name type="primary">KNOX3</name>
    <name type="synonym">K</name>
</gene>
<dbReference type="EMBL" id="X83518">
    <property type="protein sequence ID" value="CAA58503.1"/>
    <property type="molecule type" value="Genomic_DNA"/>
</dbReference>
<dbReference type="EMBL" id="AF022390">
    <property type="protein sequence ID" value="AAB81079.1"/>
    <property type="molecule type" value="mRNA"/>
</dbReference>
<dbReference type="PIR" id="S58871">
    <property type="entry name" value="S58871"/>
</dbReference>
<dbReference type="SMR" id="Q43484"/>
<dbReference type="OMA" id="YHPTNAA"/>
<dbReference type="ExpressionAtlas" id="Q43484">
    <property type="expression patterns" value="baseline and differential"/>
</dbReference>
<dbReference type="GO" id="GO:0005634">
    <property type="term" value="C:nucleus"/>
    <property type="evidence" value="ECO:0007669"/>
    <property type="project" value="UniProtKB-SubCell"/>
</dbReference>
<dbReference type="GO" id="GO:0003677">
    <property type="term" value="F:DNA binding"/>
    <property type="evidence" value="ECO:0007669"/>
    <property type="project" value="UniProtKB-KW"/>
</dbReference>
<dbReference type="GO" id="GO:0000981">
    <property type="term" value="F:DNA-binding transcription factor activity, RNA polymerase II-specific"/>
    <property type="evidence" value="ECO:0007669"/>
    <property type="project" value="InterPro"/>
</dbReference>
<dbReference type="CDD" id="cd00086">
    <property type="entry name" value="homeodomain"/>
    <property type="match status" value="1"/>
</dbReference>
<dbReference type="FunFam" id="1.10.10.60:FF:000076">
    <property type="entry name" value="Homeobox protein knotted-1-like 2"/>
    <property type="match status" value="1"/>
</dbReference>
<dbReference type="Gene3D" id="1.10.10.60">
    <property type="entry name" value="Homeodomain-like"/>
    <property type="match status" value="1"/>
</dbReference>
<dbReference type="InterPro" id="IPR005539">
    <property type="entry name" value="ELK_dom"/>
</dbReference>
<dbReference type="InterPro" id="IPR001356">
    <property type="entry name" value="HD"/>
</dbReference>
<dbReference type="InterPro" id="IPR017970">
    <property type="entry name" value="Homeobox_CS"/>
</dbReference>
<dbReference type="InterPro" id="IPR009057">
    <property type="entry name" value="Homeodomain-like_sf"/>
</dbReference>
<dbReference type="InterPro" id="IPR008422">
    <property type="entry name" value="KN_HD"/>
</dbReference>
<dbReference type="InterPro" id="IPR005540">
    <property type="entry name" value="KNOX1"/>
</dbReference>
<dbReference type="InterPro" id="IPR005541">
    <property type="entry name" value="KNOX2"/>
</dbReference>
<dbReference type="InterPro" id="IPR050224">
    <property type="entry name" value="TALE_homeobox"/>
</dbReference>
<dbReference type="PANTHER" id="PTHR11850">
    <property type="entry name" value="HOMEOBOX PROTEIN TRANSCRIPTION FACTORS"/>
    <property type="match status" value="1"/>
</dbReference>
<dbReference type="Pfam" id="PF03789">
    <property type="entry name" value="ELK"/>
    <property type="match status" value="1"/>
</dbReference>
<dbReference type="Pfam" id="PF05920">
    <property type="entry name" value="Homeobox_KN"/>
    <property type="match status" value="1"/>
</dbReference>
<dbReference type="Pfam" id="PF03790">
    <property type="entry name" value="KNOX1"/>
    <property type="match status" value="1"/>
</dbReference>
<dbReference type="Pfam" id="PF03791">
    <property type="entry name" value="KNOX2"/>
    <property type="match status" value="1"/>
</dbReference>
<dbReference type="SMART" id="SM01188">
    <property type="entry name" value="ELK"/>
    <property type="match status" value="2"/>
</dbReference>
<dbReference type="SMART" id="SM00389">
    <property type="entry name" value="HOX"/>
    <property type="match status" value="1"/>
</dbReference>
<dbReference type="SMART" id="SM01255">
    <property type="entry name" value="KNOX1"/>
    <property type="match status" value="1"/>
</dbReference>
<dbReference type="SMART" id="SM01256">
    <property type="entry name" value="KNOX2"/>
    <property type="match status" value="1"/>
</dbReference>
<dbReference type="SUPFAM" id="SSF46689">
    <property type="entry name" value="Homeodomain-like"/>
    <property type="match status" value="1"/>
</dbReference>
<dbReference type="PROSITE" id="PS51213">
    <property type="entry name" value="ELK"/>
    <property type="match status" value="1"/>
</dbReference>
<dbReference type="PROSITE" id="PS00027">
    <property type="entry name" value="HOMEOBOX_1"/>
    <property type="match status" value="1"/>
</dbReference>
<dbReference type="PROSITE" id="PS50071">
    <property type="entry name" value="HOMEOBOX_2"/>
    <property type="match status" value="1"/>
</dbReference>
<sequence>MEEIGHHFGLGATAHGQHHSQLPWGSSPLSAVISPPPQQQQQHQQQSAGYLAHSPLSLNTAPPGVSHGGGSGCSNPVLQLANGSLLEACAKAAKEPSSSSYAADVEAIKAKIISHPHYSSLLAAYLDCQKVGAPPEVSARLTAVAQDLELRQRTALGGLGTATEPELDQFMEAYHEMLVKYREELTRPLQEAMEFLRRVETQLNSLSISGRSLRNILSTGSSEEDQEGSGGETELPEIDAHGVDQELKHHLLKKYSGYLSSLKQELSKKKKKGKLPKEARQQLLSWWEMHYKWPYPSESQKVALAESTGLDLKQINNWFINQRKRHWKPTDEMQFVMMDAYHPPNAAFYMDGHFVNDSGLYRFG</sequence>
<protein>
    <recommendedName>
        <fullName>Homeobox protein KNOX3</fullName>
    </recommendedName>
    <alternativeName>
        <fullName>Hooded protein</fullName>
    </alternativeName>
</protein>
<keyword id="KW-0238">DNA-binding</keyword>
<keyword id="KW-0371">Homeobox</keyword>
<keyword id="KW-0539">Nucleus</keyword>
<name>KNOX3_HORVU</name>
<reference key="1">
    <citation type="journal article" date="1995" name="Nature">
        <title>The barley hooded mutation caused by a duplication in a homeobox gene intron.</title>
        <authorList>
            <person name="Mueller K.J."/>
            <person name="Romano N."/>
            <person name="Gerstner O."/>
            <person name="Garcia-Maroto F."/>
            <person name="Pozzi C."/>
            <person name="Salamini F."/>
            <person name="Rohde W."/>
        </authorList>
    </citation>
    <scope>NUCLEOTIDE SEQUENCE [GENOMIC DNA]</scope>
    <source>
        <strain>cv. C1</strain>
        <tissue>Leaf</tissue>
    </source>
</reference>
<reference key="2">
    <citation type="journal article" date="1997" name="FEBS Lett.">
        <title>DNA binding sites recognised in vitro by a knotted class 1 homeodomain protein encoded by the hooded gene, k, in barley (Hordeum vulgare).</title>
        <authorList>
            <person name="Krusell L."/>
            <person name="Rasmussen I."/>
            <person name="Gausing K."/>
        </authorList>
    </citation>
    <scope>NUCLEOTIDE SEQUENCE [MRNA]</scope>
    <scope>IDENTIFICATION OF DNA-BINDING SITE</scope>
    <source>
        <strain>cv. Bomi</strain>
        <tissue>Seedling</tissue>
    </source>
</reference>
<organism>
    <name type="scientific">Hordeum vulgare</name>
    <name type="common">Barley</name>
    <dbReference type="NCBI Taxonomy" id="4513"/>
    <lineage>
        <taxon>Eukaryota</taxon>
        <taxon>Viridiplantae</taxon>
        <taxon>Streptophyta</taxon>
        <taxon>Embryophyta</taxon>
        <taxon>Tracheophyta</taxon>
        <taxon>Spermatophyta</taxon>
        <taxon>Magnoliopsida</taxon>
        <taxon>Liliopsida</taxon>
        <taxon>Poales</taxon>
        <taxon>Poaceae</taxon>
        <taxon>BOP clade</taxon>
        <taxon>Pooideae</taxon>
        <taxon>Triticodae</taxon>
        <taxon>Triticeae</taxon>
        <taxon>Hordeinae</taxon>
        <taxon>Hordeum</taxon>
    </lineage>
</organism>
<evidence type="ECO:0000255" key="1">
    <source>
        <dbReference type="PROSITE-ProRule" id="PRU00108"/>
    </source>
</evidence>
<evidence type="ECO:0000255" key="2">
    <source>
        <dbReference type="PROSITE-ProRule" id="PRU00559"/>
    </source>
</evidence>
<evidence type="ECO:0000256" key="3">
    <source>
        <dbReference type="SAM" id="MobiDB-lite"/>
    </source>
</evidence>
<evidence type="ECO:0000305" key="4"/>
<proteinExistence type="evidence at protein level"/>
<feature type="chain" id="PRO_0000049165" description="Homeobox protein KNOX3">
    <location>
        <begin position="1"/>
        <end position="364"/>
    </location>
</feature>
<feature type="domain" description="ELK" evidence="2">
    <location>
        <begin position="246"/>
        <end position="266"/>
    </location>
</feature>
<feature type="DNA-binding region" description="Homeobox; TALE-type" evidence="1">
    <location>
        <begin position="267"/>
        <end position="330"/>
    </location>
</feature>
<feature type="region of interest" description="Disordered" evidence="3">
    <location>
        <begin position="13"/>
        <end position="49"/>
    </location>
</feature>
<feature type="compositionally biased region" description="Polar residues" evidence="3">
    <location>
        <begin position="19"/>
        <end position="29"/>
    </location>
</feature>
<feature type="sequence variant" description="In strain: cv. Bomi.">
    <original>Y</original>
    <variation>H</variation>
    <location>
        <position position="118"/>
    </location>
</feature>
<feature type="sequence variant" description="In strain: cv. Bomi.">
    <original>G</original>
    <variation>V</variation>
    <location>
        <position position="210"/>
    </location>
</feature>